<feature type="chain" id="PRO_0000326032" description="Transmembrane protein 198">
    <location>
        <begin position="1"/>
        <end position="369"/>
    </location>
</feature>
<feature type="transmembrane region" description="Helical" evidence="1">
    <location>
        <begin position="37"/>
        <end position="57"/>
    </location>
</feature>
<feature type="transmembrane region" description="Helical" evidence="1">
    <location>
        <begin position="60"/>
        <end position="80"/>
    </location>
</feature>
<feature type="transmembrane region" description="Helical" evidence="1">
    <location>
        <begin position="93"/>
        <end position="113"/>
    </location>
</feature>
<feature type="transmembrane region" description="Helical" evidence="1">
    <location>
        <begin position="117"/>
        <end position="137"/>
    </location>
</feature>
<feature type="transmembrane region" description="Helical" evidence="1">
    <location>
        <begin position="148"/>
        <end position="168"/>
    </location>
</feature>
<feature type="transmembrane region" description="Helical" evidence="1">
    <location>
        <begin position="181"/>
        <end position="201"/>
    </location>
</feature>
<feature type="transmembrane region" description="Helical" evidence="1">
    <location>
        <begin position="216"/>
        <end position="236"/>
    </location>
</feature>
<feature type="region of interest" description="Disordered" evidence="2">
    <location>
        <begin position="266"/>
        <end position="308"/>
    </location>
</feature>
<accession>Q498W5</accession>
<accession>A0A8M9QFG9</accession>
<organism>
    <name type="scientific">Danio rerio</name>
    <name type="common">Zebrafish</name>
    <name type="synonym">Brachydanio rerio</name>
    <dbReference type="NCBI Taxonomy" id="7955"/>
    <lineage>
        <taxon>Eukaryota</taxon>
        <taxon>Metazoa</taxon>
        <taxon>Chordata</taxon>
        <taxon>Craniata</taxon>
        <taxon>Vertebrata</taxon>
        <taxon>Euteleostomi</taxon>
        <taxon>Actinopterygii</taxon>
        <taxon>Neopterygii</taxon>
        <taxon>Teleostei</taxon>
        <taxon>Ostariophysi</taxon>
        <taxon>Cypriniformes</taxon>
        <taxon>Danionidae</taxon>
        <taxon>Danioninae</taxon>
        <taxon>Danio</taxon>
    </lineage>
</organism>
<evidence type="ECO:0000255" key="1"/>
<evidence type="ECO:0000256" key="2">
    <source>
        <dbReference type="SAM" id="MobiDB-lite"/>
    </source>
</evidence>
<evidence type="ECO:0000305" key="3"/>
<proteinExistence type="evidence at transcript level"/>
<comment type="subcellular location">
    <subcellularLocation>
        <location evidence="3">Membrane</location>
        <topology evidence="3">Multi-pass membrane protein</topology>
    </subcellularLocation>
</comment>
<comment type="similarity">
    <text evidence="3">Belongs to the TMEM198 family.</text>
</comment>
<reference key="1">
    <citation type="journal article" date="2013" name="Nature">
        <title>The zebrafish reference genome sequence and its relationship to the human genome.</title>
        <authorList>
            <person name="Howe K."/>
            <person name="Clark M.D."/>
            <person name="Torroja C.F."/>
            <person name="Torrance J."/>
            <person name="Berthelot C."/>
            <person name="Muffato M."/>
            <person name="Collins J.E."/>
            <person name="Humphray S."/>
            <person name="McLaren K."/>
            <person name="Matthews L."/>
            <person name="McLaren S."/>
            <person name="Sealy I."/>
            <person name="Caccamo M."/>
            <person name="Churcher C."/>
            <person name="Scott C."/>
            <person name="Barrett J.C."/>
            <person name="Koch R."/>
            <person name="Rauch G.J."/>
            <person name="White S."/>
            <person name="Chow W."/>
            <person name="Kilian B."/>
            <person name="Quintais L.T."/>
            <person name="Guerra-Assuncao J.A."/>
            <person name="Zhou Y."/>
            <person name="Gu Y."/>
            <person name="Yen J."/>
            <person name="Vogel J.H."/>
            <person name="Eyre T."/>
            <person name="Redmond S."/>
            <person name="Banerjee R."/>
            <person name="Chi J."/>
            <person name="Fu B."/>
            <person name="Langley E."/>
            <person name="Maguire S.F."/>
            <person name="Laird G.K."/>
            <person name="Lloyd D."/>
            <person name="Kenyon E."/>
            <person name="Donaldson S."/>
            <person name="Sehra H."/>
            <person name="Almeida-King J."/>
            <person name="Loveland J."/>
            <person name="Trevanion S."/>
            <person name="Jones M."/>
            <person name="Quail M."/>
            <person name="Willey D."/>
            <person name="Hunt A."/>
            <person name="Burton J."/>
            <person name="Sims S."/>
            <person name="McLay K."/>
            <person name="Plumb B."/>
            <person name="Davis J."/>
            <person name="Clee C."/>
            <person name="Oliver K."/>
            <person name="Clark R."/>
            <person name="Riddle C."/>
            <person name="Elliot D."/>
            <person name="Threadgold G."/>
            <person name="Harden G."/>
            <person name="Ware D."/>
            <person name="Begum S."/>
            <person name="Mortimore B."/>
            <person name="Kerry G."/>
            <person name="Heath P."/>
            <person name="Phillimore B."/>
            <person name="Tracey A."/>
            <person name="Corby N."/>
            <person name="Dunn M."/>
            <person name="Johnson C."/>
            <person name="Wood J."/>
            <person name="Clark S."/>
            <person name="Pelan S."/>
            <person name="Griffiths G."/>
            <person name="Smith M."/>
            <person name="Glithero R."/>
            <person name="Howden P."/>
            <person name="Barker N."/>
            <person name="Lloyd C."/>
            <person name="Stevens C."/>
            <person name="Harley J."/>
            <person name="Holt K."/>
            <person name="Panagiotidis G."/>
            <person name="Lovell J."/>
            <person name="Beasley H."/>
            <person name="Henderson C."/>
            <person name="Gordon D."/>
            <person name="Auger K."/>
            <person name="Wright D."/>
            <person name="Collins J."/>
            <person name="Raisen C."/>
            <person name="Dyer L."/>
            <person name="Leung K."/>
            <person name="Robertson L."/>
            <person name="Ambridge K."/>
            <person name="Leongamornlert D."/>
            <person name="McGuire S."/>
            <person name="Gilderthorp R."/>
            <person name="Griffiths C."/>
            <person name="Manthravadi D."/>
            <person name="Nichol S."/>
            <person name="Barker G."/>
            <person name="Whitehead S."/>
            <person name="Kay M."/>
            <person name="Brown J."/>
            <person name="Murnane C."/>
            <person name="Gray E."/>
            <person name="Humphries M."/>
            <person name="Sycamore N."/>
            <person name="Barker D."/>
            <person name="Saunders D."/>
            <person name="Wallis J."/>
            <person name="Babbage A."/>
            <person name="Hammond S."/>
            <person name="Mashreghi-Mohammadi M."/>
            <person name="Barr L."/>
            <person name="Martin S."/>
            <person name="Wray P."/>
            <person name="Ellington A."/>
            <person name="Matthews N."/>
            <person name="Ellwood M."/>
            <person name="Woodmansey R."/>
            <person name="Clark G."/>
            <person name="Cooper J."/>
            <person name="Tromans A."/>
            <person name="Grafham D."/>
            <person name="Skuce C."/>
            <person name="Pandian R."/>
            <person name="Andrews R."/>
            <person name="Harrison E."/>
            <person name="Kimberley A."/>
            <person name="Garnett J."/>
            <person name="Fosker N."/>
            <person name="Hall R."/>
            <person name="Garner P."/>
            <person name="Kelly D."/>
            <person name="Bird C."/>
            <person name="Palmer S."/>
            <person name="Gehring I."/>
            <person name="Berger A."/>
            <person name="Dooley C.M."/>
            <person name="Ersan-Urun Z."/>
            <person name="Eser C."/>
            <person name="Geiger H."/>
            <person name="Geisler M."/>
            <person name="Karotki L."/>
            <person name="Kirn A."/>
            <person name="Konantz J."/>
            <person name="Konantz M."/>
            <person name="Oberlander M."/>
            <person name="Rudolph-Geiger S."/>
            <person name="Teucke M."/>
            <person name="Lanz C."/>
            <person name="Raddatz G."/>
            <person name="Osoegawa K."/>
            <person name="Zhu B."/>
            <person name="Rapp A."/>
            <person name="Widaa S."/>
            <person name="Langford C."/>
            <person name="Yang F."/>
            <person name="Schuster S.C."/>
            <person name="Carter N.P."/>
            <person name="Harrow J."/>
            <person name="Ning Z."/>
            <person name="Herrero J."/>
            <person name="Searle S.M."/>
            <person name="Enright A."/>
            <person name="Geisler R."/>
            <person name="Plasterk R.H."/>
            <person name="Lee C."/>
            <person name="Westerfield M."/>
            <person name="de Jong P.J."/>
            <person name="Zon L.I."/>
            <person name="Postlethwait J.H."/>
            <person name="Nusslein-Volhard C."/>
            <person name="Hubbard T.J."/>
            <person name="Roest Crollius H."/>
            <person name="Rogers J."/>
            <person name="Stemple D.L."/>
        </authorList>
    </citation>
    <scope>NUCLEOTIDE SEQUENCE [LARGE SCALE GENOMIC DNA]</scope>
    <source>
        <strain>Tuebingen</strain>
    </source>
</reference>
<reference key="2">
    <citation type="submission" date="2005-08" db="EMBL/GenBank/DDBJ databases">
        <authorList>
            <consortium name="NIH - Zebrafish Gene Collection (ZGC) project"/>
        </authorList>
    </citation>
    <scope>NUCLEOTIDE SEQUENCE [LARGE SCALE MRNA]</scope>
</reference>
<name>TM198_DANRE</name>
<protein>
    <recommendedName>
        <fullName>Transmembrane protein 198</fullName>
    </recommendedName>
</protein>
<sequence length="369" mass="40856">MTSTLQTLAFKLAPPSREAGSGQLEPCSDVQGRRYEVVPSVVCSMCCLFGIIYCFFGYRCFKAVLFLTGLMFGSVIIFLLCYKERVLDTQLSVEASVGIGLGIGTLCGLVTMLVRSVGLFMVGLLLGLLVGIGTLIGMEELSSNPPRSVWVPLGVLLGLGMLFAVLTLQWQRCFTTLSTAVFGAAVIVVATDYFVELFALVRYIYERVKTGPREPVCWTTWVVLGAWPALALLGVLVQWRVTAEGYSHTKVMISRQQRRVQLMRIRQKEERRESSRKKKRKQPQSAQHTHAAKALHPEPAYRRKPNPIRRFDGDVLSPSYIQSFRDRQVDGRAYPVGGLMPSGHTSVDMDYDCGSTVPLTAGVGPHVRV</sequence>
<gene>
    <name type="primary">tmem198ab</name>
    <name type="ORF">zgc:112212</name>
</gene>
<keyword id="KW-0472">Membrane</keyword>
<keyword id="KW-1185">Reference proteome</keyword>
<keyword id="KW-0812">Transmembrane</keyword>
<keyword id="KW-1133">Transmembrane helix</keyword>
<dbReference type="EMBL" id="CU652701">
    <property type="status" value="NOT_ANNOTATED_CDS"/>
    <property type="molecule type" value="Genomic_DNA"/>
</dbReference>
<dbReference type="EMBL" id="BC100048">
    <property type="protein sequence ID" value="AAI00049.1"/>
    <property type="molecule type" value="mRNA"/>
</dbReference>
<dbReference type="RefSeq" id="NP_001029091.1">
    <property type="nucleotide sequence ID" value="NM_001033919.2"/>
</dbReference>
<dbReference type="RefSeq" id="XP_009300540.1">
    <property type="nucleotide sequence ID" value="XM_009302265.4"/>
</dbReference>
<dbReference type="RefSeq" id="XP_021332574.1">
    <property type="nucleotide sequence ID" value="XM_021476899.2"/>
</dbReference>
<dbReference type="RefSeq" id="XP_021332575.1">
    <property type="nucleotide sequence ID" value="XM_021476900.2"/>
</dbReference>
<dbReference type="RefSeq" id="XP_068077860.1">
    <property type="nucleotide sequence ID" value="XM_068221759.1"/>
</dbReference>
<dbReference type="FunCoup" id="Q498W5">
    <property type="interactions" value="523"/>
</dbReference>
<dbReference type="STRING" id="7955.ENSDARP00000043521"/>
<dbReference type="PaxDb" id="7955-ENSDARP00000043521"/>
<dbReference type="Ensembl" id="ENSDART00000043522">
    <property type="protein sequence ID" value="ENSDARP00000043521"/>
    <property type="gene ID" value="ENSDARG00000034685"/>
</dbReference>
<dbReference type="Ensembl" id="ENSDART00000182899">
    <property type="protein sequence ID" value="ENSDARP00000155749"/>
    <property type="gene ID" value="ENSDARG00000034685"/>
</dbReference>
<dbReference type="Ensembl" id="ENSDART00000185708">
    <property type="protein sequence ID" value="ENSDARP00000155265"/>
    <property type="gene ID" value="ENSDARG00000111728"/>
</dbReference>
<dbReference type="GeneID" id="564608"/>
<dbReference type="KEGG" id="dre:564608"/>
<dbReference type="AGR" id="ZFIN:ZDB-GENE-050809-123"/>
<dbReference type="CTD" id="564608"/>
<dbReference type="ZFIN" id="ZDB-GENE-050809-123">
    <property type="gene designation" value="tmem198ab"/>
</dbReference>
<dbReference type="eggNOG" id="ENOG502QS1E">
    <property type="taxonomic scope" value="Eukaryota"/>
</dbReference>
<dbReference type="HOGENOM" id="CLU_043600_0_0_1"/>
<dbReference type="InParanoid" id="Q498W5"/>
<dbReference type="OMA" id="KQLHAEP"/>
<dbReference type="OrthoDB" id="115781at2759"/>
<dbReference type="PhylomeDB" id="Q498W5"/>
<dbReference type="TreeFam" id="TF323324"/>
<dbReference type="PRO" id="PR:Q498W5"/>
<dbReference type="Proteomes" id="UP000000437">
    <property type="component" value="Alternate scaffold 6"/>
</dbReference>
<dbReference type="Proteomes" id="UP000000437">
    <property type="component" value="Chromosome 6"/>
</dbReference>
<dbReference type="Bgee" id="ENSDARG00000034685">
    <property type="expression patterns" value="Expressed in brain and 26 other cell types or tissues"/>
</dbReference>
<dbReference type="ExpressionAtlas" id="Q498W5">
    <property type="expression patterns" value="baseline and differential"/>
</dbReference>
<dbReference type="GO" id="GO:0031410">
    <property type="term" value="C:cytoplasmic vesicle"/>
    <property type="evidence" value="ECO:0000318"/>
    <property type="project" value="GO_Central"/>
</dbReference>
<dbReference type="GO" id="GO:0005886">
    <property type="term" value="C:plasma membrane"/>
    <property type="evidence" value="ECO:0000318"/>
    <property type="project" value="GO_Central"/>
</dbReference>
<dbReference type="GO" id="GO:0090263">
    <property type="term" value="P:positive regulation of canonical Wnt signaling pathway"/>
    <property type="evidence" value="ECO:0000318"/>
    <property type="project" value="GO_Central"/>
</dbReference>
<dbReference type="InterPro" id="IPR025256">
    <property type="entry name" value="TM7S3/TM198-like_dom"/>
</dbReference>
<dbReference type="InterPro" id="IPR040236">
    <property type="entry name" value="TMEM198"/>
</dbReference>
<dbReference type="PANTHER" id="PTHR31247">
    <property type="entry name" value="TRANSMEMBRANE PROTEIN 198 FAMILY MEMBER"/>
    <property type="match status" value="1"/>
</dbReference>
<dbReference type="PANTHER" id="PTHR31247:SF16">
    <property type="entry name" value="TRANSMEMBRANE PROTEIN 198-B"/>
    <property type="match status" value="1"/>
</dbReference>
<dbReference type="Pfam" id="PF13886">
    <property type="entry name" value="TM7S3_TM198"/>
    <property type="match status" value="1"/>
</dbReference>